<organism>
    <name type="scientific">Staphylococcus epidermidis (strain ATCC 35984 / DSM 28319 / BCRC 17069 / CCUG 31568 / BM 3577 / RP62A)</name>
    <dbReference type="NCBI Taxonomy" id="176279"/>
    <lineage>
        <taxon>Bacteria</taxon>
        <taxon>Bacillati</taxon>
        <taxon>Bacillota</taxon>
        <taxon>Bacilli</taxon>
        <taxon>Bacillales</taxon>
        <taxon>Staphylococcaceae</taxon>
        <taxon>Staphylococcus</taxon>
    </lineage>
</organism>
<evidence type="ECO:0000255" key="1">
    <source>
        <dbReference type="HAMAP-Rule" id="MF_01124"/>
    </source>
</evidence>
<evidence type="ECO:0000256" key="2">
    <source>
        <dbReference type="SAM" id="MobiDB-lite"/>
    </source>
</evidence>
<reference key="1">
    <citation type="journal article" date="2005" name="J. Bacteriol.">
        <title>Insights on evolution of virulence and resistance from the complete genome analysis of an early methicillin-resistant Staphylococcus aureus strain and a biofilm-producing methicillin-resistant Staphylococcus epidermidis strain.</title>
        <authorList>
            <person name="Gill S.R."/>
            <person name="Fouts D.E."/>
            <person name="Archer G.L."/>
            <person name="Mongodin E.F."/>
            <person name="DeBoy R.T."/>
            <person name="Ravel J."/>
            <person name="Paulsen I.T."/>
            <person name="Kolonay J.F."/>
            <person name="Brinkac L.M."/>
            <person name="Beanan M.J."/>
            <person name="Dodson R.J."/>
            <person name="Daugherty S.C."/>
            <person name="Madupu R."/>
            <person name="Angiuoli S.V."/>
            <person name="Durkin A.S."/>
            <person name="Haft D.H."/>
            <person name="Vamathevan J.J."/>
            <person name="Khouri H."/>
            <person name="Utterback T.R."/>
            <person name="Lee C."/>
            <person name="Dimitrov G."/>
            <person name="Jiang L."/>
            <person name="Qin H."/>
            <person name="Weidman J."/>
            <person name="Tran K."/>
            <person name="Kang K.H."/>
            <person name="Hance I.R."/>
            <person name="Nelson K.E."/>
            <person name="Fraser C.M."/>
        </authorList>
    </citation>
    <scope>NUCLEOTIDE SEQUENCE [LARGE SCALE GENOMIC DNA]</scope>
    <source>
        <strain>ATCC 35984 / DSM 28319 / BCRC 17069 / CCUG 31568 / BM 3577 / RP62A</strain>
    </source>
</reference>
<comment type="function">
    <text evidence="1">Enables the recognition and targeting of unfolded and aggregated proteins to the ClpC protease or to other proteins involved in proteolysis.</text>
</comment>
<comment type="subunit">
    <text evidence="1">Homodimer.</text>
</comment>
<comment type="domain">
    <text>The N-terminal domain probably binds unfolded/aggregated proteins; the C-terminal domain interacts with ClpC.</text>
</comment>
<comment type="similarity">
    <text evidence="1">Belongs to the MecA family.</text>
</comment>
<gene>
    <name evidence="1" type="primary">mecA</name>
    <name type="ordered locus">SERP0578</name>
</gene>
<name>MECA_STAEQ</name>
<dbReference type="EMBL" id="CP000029">
    <property type="protein sequence ID" value="AAW53980.1"/>
    <property type="molecule type" value="Genomic_DNA"/>
</dbReference>
<dbReference type="RefSeq" id="WP_001829308.1">
    <property type="nucleotide sequence ID" value="NC_002976.3"/>
</dbReference>
<dbReference type="SMR" id="Q5HQH1"/>
<dbReference type="STRING" id="176279.SERP0578"/>
<dbReference type="GeneID" id="50019172"/>
<dbReference type="KEGG" id="ser:SERP0578"/>
<dbReference type="eggNOG" id="COG4862">
    <property type="taxonomic scope" value="Bacteria"/>
</dbReference>
<dbReference type="HOGENOM" id="CLU_071496_2_1_9"/>
<dbReference type="Proteomes" id="UP000000531">
    <property type="component" value="Chromosome"/>
</dbReference>
<dbReference type="GO" id="GO:0030674">
    <property type="term" value="F:protein-macromolecule adaptor activity"/>
    <property type="evidence" value="ECO:0007669"/>
    <property type="project" value="UniProtKB-UniRule"/>
</dbReference>
<dbReference type="Gene3D" id="3.30.70.1950">
    <property type="match status" value="1"/>
</dbReference>
<dbReference type="HAMAP" id="MF_01124">
    <property type="entry name" value="MecA"/>
    <property type="match status" value="1"/>
</dbReference>
<dbReference type="InterPro" id="IPR038471">
    <property type="entry name" value="MecA_C_sf"/>
</dbReference>
<dbReference type="InterPro" id="IPR008681">
    <property type="entry name" value="Neg-reg_MecA"/>
</dbReference>
<dbReference type="NCBIfam" id="NF002642">
    <property type="entry name" value="PRK02315.1-3"/>
    <property type="match status" value="1"/>
</dbReference>
<dbReference type="NCBIfam" id="NF002644">
    <property type="entry name" value="PRK02315.1-5"/>
    <property type="match status" value="1"/>
</dbReference>
<dbReference type="PANTHER" id="PTHR39161">
    <property type="entry name" value="ADAPTER PROTEIN MECA"/>
    <property type="match status" value="1"/>
</dbReference>
<dbReference type="PANTHER" id="PTHR39161:SF1">
    <property type="entry name" value="ADAPTER PROTEIN MECA 1"/>
    <property type="match status" value="1"/>
</dbReference>
<dbReference type="Pfam" id="PF05389">
    <property type="entry name" value="MecA"/>
    <property type="match status" value="1"/>
</dbReference>
<dbReference type="PIRSF" id="PIRSF029008">
    <property type="entry name" value="MecA"/>
    <property type="match status" value="1"/>
</dbReference>
<accession>Q5HQH1</accession>
<sequence>MRIERVDDTTVKLFITYSDIEARGFSREDLWSNRKRGEEFFWSMMDEINEEEDFVVEGPLWIQVHAFEKGVEVTISKSKNEDAMNMSDDDTNHQFDDQVNELLAQTLEGEESLEDLFEQRKQQKKNHQDKQQRRAHKPSNVRNIIVKFDDLEQVIDYAYHNNQNTDEFEDLLYMIDNKYYYSIHFDDSVSQEMINDSYSQLLEFAYPTDKTNIYLNDYAKIIMSHNVTSQVRKYFTDTNE</sequence>
<feature type="chain" id="PRO_0000212283" description="Adapter protein MecA">
    <location>
        <begin position="1"/>
        <end position="240"/>
    </location>
</feature>
<feature type="region of interest" description="Disordered" evidence="2">
    <location>
        <begin position="119"/>
        <end position="138"/>
    </location>
</feature>
<feature type="compositionally biased region" description="Basic and acidic residues" evidence="2">
    <location>
        <begin position="119"/>
        <end position="132"/>
    </location>
</feature>
<protein>
    <recommendedName>
        <fullName evidence="1">Adapter protein MecA</fullName>
    </recommendedName>
</protein>
<keyword id="KW-1185">Reference proteome</keyword>
<proteinExistence type="inferred from homology"/>